<sequence length="379" mass="42860">MTNIRKTHPLFKIVSHSFIDLPAPSNISAWWNFGSLLGLCLAIQILTGLFLAMHYTSDTMTAFSSVSHICRDVNYGWLIRYMHANGASMFFICLFLHVGRGLYYGSYTYLETWNIGVILLFAVMATAFMGYVLPWGQMSFWGATVITNLLSAIPYIGTTLVEWIWGGFSVDKATLTRFFAFHFILPFIVAALIMIHLLFLHETGSNNPSGLISDSDKIPFHPYFTIKDILGALLLILILMILVLFMPDLLGDPDNYTPANPLNTPPHIKPEWYFLFAYAILRSIPNKLGGVLALIFSILILMLFPLLHMSKQRSMTFRPLSQCLFWVLVADLLALTWIGGQPVEYPFIIIGQLASILYFSIILLMIPTVSLIENKLLKW</sequence>
<name>CYB_NOTAD</name>
<dbReference type="EMBL" id="AF157843">
    <property type="protein sequence ID" value="AAD50127.1"/>
    <property type="molecule type" value="Genomic_DNA"/>
</dbReference>
<dbReference type="EMBL" id="AF157844">
    <property type="protein sequence ID" value="AAD50128.1"/>
    <property type="molecule type" value="Genomic_DNA"/>
</dbReference>
<dbReference type="SMR" id="Q9TF95"/>
<dbReference type="GO" id="GO:0005743">
    <property type="term" value="C:mitochondrial inner membrane"/>
    <property type="evidence" value="ECO:0007669"/>
    <property type="project" value="UniProtKB-SubCell"/>
</dbReference>
<dbReference type="GO" id="GO:0045275">
    <property type="term" value="C:respiratory chain complex III"/>
    <property type="evidence" value="ECO:0007669"/>
    <property type="project" value="InterPro"/>
</dbReference>
<dbReference type="GO" id="GO:0046872">
    <property type="term" value="F:metal ion binding"/>
    <property type="evidence" value="ECO:0007669"/>
    <property type="project" value="UniProtKB-KW"/>
</dbReference>
<dbReference type="GO" id="GO:0008121">
    <property type="term" value="F:ubiquinol-cytochrome-c reductase activity"/>
    <property type="evidence" value="ECO:0007669"/>
    <property type="project" value="InterPro"/>
</dbReference>
<dbReference type="GO" id="GO:0006122">
    <property type="term" value="P:mitochondrial electron transport, ubiquinol to cytochrome c"/>
    <property type="evidence" value="ECO:0007669"/>
    <property type="project" value="TreeGrafter"/>
</dbReference>
<dbReference type="CDD" id="cd00290">
    <property type="entry name" value="cytochrome_b_C"/>
    <property type="match status" value="1"/>
</dbReference>
<dbReference type="CDD" id="cd00284">
    <property type="entry name" value="Cytochrome_b_N"/>
    <property type="match status" value="1"/>
</dbReference>
<dbReference type="FunFam" id="1.20.810.10:FF:000002">
    <property type="entry name" value="Cytochrome b"/>
    <property type="match status" value="1"/>
</dbReference>
<dbReference type="Gene3D" id="1.20.810.10">
    <property type="entry name" value="Cytochrome Bc1 Complex, Chain C"/>
    <property type="match status" value="1"/>
</dbReference>
<dbReference type="InterPro" id="IPR005798">
    <property type="entry name" value="Cyt_b/b6_C"/>
</dbReference>
<dbReference type="InterPro" id="IPR036150">
    <property type="entry name" value="Cyt_b/b6_C_sf"/>
</dbReference>
<dbReference type="InterPro" id="IPR005797">
    <property type="entry name" value="Cyt_b/b6_N"/>
</dbReference>
<dbReference type="InterPro" id="IPR027387">
    <property type="entry name" value="Cytb/b6-like_sf"/>
</dbReference>
<dbReference type="InterPro" id="IPR030689">
    <property type="entry name" value="Cytochrome_b"/>
</dbReference>
<dbReference type="InterPro" id="IPR048260">
    <property type="entry name" value="Cytochrome_b_C_euk/bac"/>
</dbReference>
<dbReference type="InterPro" id="IPR048259">
    <property type="entry name" value="Cytochrome_b_N_euk/bac"/>
</dbReference>
<dbReference type="InterPro" id="IPR016174">
    <property type="entry name" value="Di-haem_cyt_TM"/>
</dbReference>
<dbReference type="PANTHER" id="PTHR19271">
    <property type="entry name" value="CYTOCHROME B"/>
    <property type="match status" value="1"/>
</dbReference>
<dbReference type="PANTHER" id="PTHR19271:SF16">
    <property type="entry name" value="CYTOCHROME B"/>
    <property type="match status" value="1"/>
</dbReference>
<dbReference type="Pfam" id="PF00032">
    <property type="entry name" value="Cytochrom_B_C"/>
    <property type="match status" value="1"/>
</dbReference>
<dbReference type="Pfam" id="PF00033">
    <property type="entry name" value="Cytochrome_B"/>
    <property type="match status" value="1"/>
</dbReference>
<dbReference type="PIRSF" id="PIRSF038885">
    <property type="entry name" value="COB"/>
    <property type="match status" value="1"/>
</dbReference>
<dbReference type="SUPFAM" id="SSF81648">
    <property type="entry name" value="a domain/subunit of cytochrome bc1 complex (Ubiquinol-cytochrome c reductase)"/>
    <property type="match status" value="1"/>
</dbReference>
<dbReference type="SUPFAM" id="SSF81342">
    <property type="entry name" value="Transmembrane di-heme cytochromes"/>
    <property type="match status" value="1"/>
</dbReference>
<dbReference type="PROSITE" id="PS51003">
    <property type="entry name" value="CYTB_CTER"/>
    <property type="match status" value="1"/>
</dbReference>
<dbReference type="PROSITE" id="PS51002">
    <property type="entry name" value="CYTB_NTER"/>
    <property type="match status" value="1"/>
</dbReference>
<geneLocation type="mitochondrion"/>
<gene>
    <name type="primary">MT-CYB</name>
    <name type="synonym">COB</name>
    <name type="synonym">CYTB</name>
    <name type="synonym">MTCYB</name>
</gene>
<comment type="function">
    <text evidence="2">Component of the ubiquinol-cytochrome c reductase complex (complex III or cytochrome b-c1 complex) that is part of the mitochondrial respiratory chain. The b-c1 complex mediates electron transfer from ubiquinol to cytochrome c. Contributes to the generation of a proton gradient across the mitochondrial membrane that is then used for ATP synthesis.</text>
</comment>
<comment type="cofactor">
    <cofactor evidence="2">
        <name>heme b</name>
        <dbReference type="ChEBI" id="CHEBI:60344"/>
    </cofactor>
    <text evidence="2">Binds 2 heme b groups non-covalently.</text>
</comment>
<comment type="subunit">
    <text evidence="2">The cytochrome bc1 complex contains 11 subunits: 3 respiratory subunits (MT-CYB, CYC1 and UQCRFS1), 2 core proteins (UQCRC1 and UQCRC2) and 6 low-molecular weight proteins (UQCRH/QCR6, UQCRB/QCR7, UQCRQ/QCR8, UQCR10/QCR9, UQCR11/QCR10 and a cleavage product of UQCRFS1). This cytochrome bc1 complex then forms a dimer.</text>
</comment>
<comment type="subcellular location">
    <subcellularLocation>
        <location evidence="2">Mitochondrion inner membrane</location>
        <topology evidence="2">Multi-pass membrane protein</topology>
    </subcellularLocation>
</comment>
<comment type="miscellaneous">
    <text evidence="1">Heme 1 (or BL or b562) is low-potential and absorbs at about 562 nm, and heme 2 (or BH or b566) is high-potential and absorbs at about 566 nm.</text>
</comment>
<comment type="similarity">
    <text evidence="3 4">Belongs to the cytochrome b family.</text>
</comment>
<comment type="caution">
    <text evidence="2">The full-length protein contains only eight transmembrane helices, not nine as predicted by bioinformatics tools.</text>
</comment>
<protein>
    <recommendedName>
        <fullName>Cytochrome b</fullName>
    </recommendedName>
    <alternativeName>
        <fullName>Complex III subunit 3</fullName>
    </alternativeName>
    <alternativeName>
        <fullName>Complex III subunit III</fullName>
    </alternativeName>
    <alternativeName>
        <fullName>Cytochrome b-c1 complex subunit 3</fullName>
    </alternativeName>
    <alternativeName>
        <fullName>Ubiquinol-cytochrome-c reductase complex cytochrome b subunit</fullName>
    </alternativeName>
</protein>
<feature type="chain" id="PRO_0000255134" description="Cytochrome b">
    <location>
        <begin position="1"/>
        <end position="379"/>
    </location>
</feature>
<feature type="transmembrane region" description="Helical" evidence="2">
    <location>
        <begin position="33"/>
        <end position="53"/>
    </location>
</feature>
<feature type="transmembrane region" description="Helical" evidence="2">
    <location>
        <begin position="77"/>
        <end position="98"/>
    </location>
</feature>
<feature type="transmembrane region" description="Helical" evidence="2">
    <location>
        <begin position="113"/>
        <end position="133"/>
    </location>
</feature>
<feature type="transmembrane region" description="Helical" evidence="2">
    <location>
        <begin position="178"/>
        <end position="198"/>
    </location>
</feature>
<feature type="transmembrane region" description="Helical" evidence="2">
    <location>
        <begin position="226"/>
        <end position="246"/>
    </location>
</feature>
<feature type="transmembrane region" description="Helical" evidence="2">
    <location>
        <begin position="288"/>
        <end position="308"/>
    </location>
</feature>
<feature type="transmembrane region" description="Helical" evidence="2">
    <location>
        <begin position="320"/>
        <end position="340"/>
    </location>
</feature>
<feature type="transmembrane region" description="Helical" evidence="2">
    <location>
        <begin position="347"/>
        <end position="367"/>
    </location>
</feature>
<feature type="binding site" description="axial binding residue" evidence="2">
    <location>
        <position position="83"/>
    </location>
    <ligand>
        <name>heme b</name>
        <dbReference type="ChEBI" id="CHEBI:60344"/>
        <label>b562</label>
    </ligand>
    <ligandPart>
        <name>Fe</name>
        <dbReference type="ChEBI" id="CHEBI:18248"/>
    </ligandPart>
</feature>
<feature type="binding site" description="axial binding residue" evidence="2">
    <location>
        <position position="97"/>
    </location>
    <ligand>
        <name>heme b</name>
        <dbReference type="ChEBI" id="CHEBI:60344"/>
        <label>b566</label>
    </ligand>
    <ligandPart>
        <name>Fe</name>
        <dbReference type="ChEBI" id="CHEBI:18248"/>
    </ligandPart>
</feature>
<feature type="binding site" description="axial binding residue" evidence="2">
    <location>
        <position position="182"/>
    </location>
    <ligand>
        <name>heme b</name>
        <dbReference type="ChEBI" id="CHEBI:60344"/>
        <label>b562</label>
    </ligand>
    <ligandPart>
        <name>Fe</name>
        <dbReference type="ChEBI" id="CHEBI:18248"/>
    </ligandPart>
</feature>
<feature type="binding site" description="axial binding residue" evidence="2">
    <location>
        <position position="196"/>
    </location>
    <ligand>
        <name>heme b</name>
        <dbReference type="ChEBI" id="CHEBI:60344"/>
        <label>b566</label>
    </ligand>
    <ligandPart>
        <name>Fe</name>
        <dbReference type="ChEBI" id="CHEBI:18248"/>
    </ligandPart>
</feature>
<feature type="binding site" evidence="2">
    <location>
        <position position="201"/>
    </location>
    <ligand>
        <name>a ubiquinone</name>
        <dbReference type="ChEBI" id="CHEBI:16389"/>
    </ligand>
</feature>
<feature type="sequence variant" description="In strain: Isolate S104.">
    <original>M</original>
    <variation>V</variation>
    <location>
        <position position="60"/>
    </location>
</feature>
<reference key="1">
    <citation type="journal article" date="2003" name="J. Mammal. Evol.">
        <title>Phylogeny and evolutionary history of the ground squirrels (Rodentia: Marmotinae).</title>
        <authorList>
            <person name="Harrison R.G."/>
            <person name="Bogdanowicz S.M."/>
            <person name="Hoffmann R.S."/>
            <person name="Yensen E."/>
            <person name="Sherman P.W."/>
        </authorList>
    </citation>
    <scope>NUCLEOTIDE SEQUENCE [GENOMIC DNA]</scope>
    <source>
        <strain>Isolate S103</strain>
        <strain>Isolate S104</strain>
    </source>
</reference>
<organism>
    <name type="scientific">Notocitellus adocetus</name>
    <name type="common">Tropical ground squirrel</name>
    <name type="synonym">Spermophilus adocetus</name>
    <dbReference type="NCBI Taxonomy" id="99829"/>
    <lineage>
        <taxon>Eukaryota</taxon>
        <taxon>Metazoa</taxon>
        <taxon>Chordata</taxon>
        <taxon>Craniata</taxon>
        <taxon>Vertebrata</taxon>
        <taxon>Euteleostomi</taxon>
        <taxon>Mammalia</taxon>
        <taxon>Eutheria</taxon>
        <taxon>Euarchontoglires</taxon>
        <taxon>Glires</taxon>
        <taxon>Rodentia</taxon>
        <taxon>Sciuromorpha</taxon>
        <taxon>Sciuridae</taxon>
        <taxon>Xerinae</taxon>
        <taxon>Marmotini</taxon>
        <taxon>Notocitellus</taxon>
    </lineage>
</organism>
<proteinExistence type="inferred from homology"/>
<accession>Q9TF95</accession>
<accession>Q9TF94</accession>
<keyword id="KW-0249">Electron transport</keyword>
<keyword id="KW-0349">Heme</keyword>
<keyword id="KW-0408">Iron</keyword>
<keyword id="KW-0472">Membrane</keyword>
<keyword id="KW-0479">Metal-binding</keyword>
<keyword id="KW-0496">Mitochondrion</keyword>
<keyword id="KW-0999">Mitochondrion inner membrane</keyword>
<keyword id="KW-0679">Respiratory chain</keyword>
<keyword id="KW-0812">Transmembrane</keyword>
<keyword id="KW-1133">Transmembrane helix</keyword>
<keyword id="KW-0813">Transport</keyword>
<keyword id="KW-0830">Ubiquinone</keyword>
<evidence type="ECO:0000250" key="1"/>
<evidence type="ECO:0000250" key="2">
    <source>
        <dbReference type="UniProtKB" id="P00157"/>
    </source>
</evidence>
<evidence type="ECO:0000255" key="3">
    <source>
        <dbReference type="PROSITE-ProRule" id="PRU00967"/>
    </source>
</evidence>
<evidence type="ECO:0000255" key="4">
    <source>
        <dbReference type="PROSITE-ProRule" id="PRU00968"/>
    </source>
</evidence>